<sequence length="186" mass="20827">MDTFSTKSLALQAQKKLLSKMASKAVVAVLVDDTSSEVLDELYRATREFTRSRKEAQKMLKNLVKVALKLGLLLRGDQLGGEELALLRRFRHRARCLAMTAVSFHQVDFTFDRRVLAAGLLECRDLLHQAVGPHLTAKSHGRINHVFGHLADCDFLAALYGPAEPYRSHLRRICEGLGRMLDEGSL</sequence>
<evidence type="ECO:0000250" key="1">
    <source>
        <dbReference type="UniProtKB" id="Q8K288"/>
    </source>
</evidence>
<evidence type="ECO:0000269" key="2">
    <source>
    </source>
</evidence>
<evidence type="ECO:0000269" key="3">
    <source>
    </source>
</evidence>
<evidence type="ECO:0000269" key="4">
    <source>
    </source>
</evidence>
<evidence type="ECO:0000303" key="5">
    <source>
    </source>
</evidence>
<evidence type="ECO:0000305" key="6"/>
<gene>
    <name type="primary">TNFAIP8L1</name>
</gene>
<dbReference type="EMBL" id="AC005339">
    <property type="status" value="NOT_ANNOTATED_CDS"/>
    <property type="molecule type" value="Genomic_DNA"/>
</dbReference>
<dbReference type="EMBL" id="CH471139">
    <property type="protein sequence ID" value="EAW69204.1"/>
    <property type="molecule type" value="Genomic_DNA"/>
</dbReference>
<dbReference type="EMBL" id="CH471139">
    <property type="protein sequence ID" value="EAW69205.1"/>
    <property type="molecule type" value="Genomic_DNA"/>
</dbReference>
<dbReference type="EMBL" id="BC017672">
    <property type="protein sequence ID" value="AAH17672.1"/>
    <property type="molecule type" value="mRNA"/>
</dbReference>
<dbReference type="CCDS" id="CCDS12132.1"/>
<dbReference type="RefSeq" id="NP_001161414.1">
    <property type="nucleotide sequence ID" value="NM_001167942.1"/>
</dbReference>
<dbReference type="RefSeq" id="NP_689575.2">
    <property type="nucleotide sequence ID" value="NM_152362.3"/>
</dbReference>
<dbReference type="RefSeq" id="XP_005259544.1">
    <property type="nucleotide sequence ID" value="XM_005259487.4"/>
</dbReference>
<dbReference type="RefSeq" id="XP_011525982.1">
    <property type="nucleotide sequence ID" value="XM_011527680.3"/>
</dbReference>
<dbReference type="RefSeq" id="XP_054175769.1">
    <property type="nucleotide sequence ID" value="XM_054319794.1"/>
</dbReference>
<dbReference type="RefSeq" id="XP_054175770.1">
    <property type="nucleotide sequence ID" value="XM_054319795.1"/>
</dbReference>
<dbReference type="SMR" id="Q8WVP5"/>
<dbReference type="BioGRID" id="125973">
    <property type="interactions" value="49"/>
</dbReference>
<dbReference type="FunCoup" id="Q8WVP5">
    <property type="interactions" value="514"/>
</dbReference>
<dbReference type="IntAct" id="Q8WVP5">
    <property type="interactions" value="12"/>
</dbReference>
<dbReference type="STRING" id="9606.ENSP00000444215"/>
<dbReference type="iPTMnet" id="Q8WVP5"/>
<dbReference type="PhosphoSitePlus" id="Q8WVP5"/>
<dbReference type="BioMuta" id="TNFAIP8L1"/>
<dbReference type="DMDM" id="146325794"/>
<dbReference type="jPOST" id="Q8WVP5"/>
<dbReference type="MassIVE" id="Q8WVP5"/>
<dbReference type="PaxDb" id="9606-ENSP00000444215"/>
<dbReference type="PeptideAtlas" id="Q8WVP5"/>
<dbReference type="ProteomicsDB" id="74809"/>
<dbReference type="Pumba" id="Q8WVP5"/>
<dbReference type="Antibodypedia" id="23694">
    <property type="antibodies" value="48 antibodies from 21 providers"/>
</dbReference>
<dbReference type="DNASU" id="126282"/>
<dbReference type="Ensembl" id="ENST00000327473.9">
    <property type="protein sequence ID" value="ENSP00000331827.3"/>
    <property type="gene ID" value="ENSG00000185361.9"/>
</dbReference>
<dbReference type="Ensembl" id="ENST00000536716.1">
    <property type="protein sequence ID" value="ENSP00000444215.1"/>
    <property type="gene ID" value="ENSG00000185361.9"/>
</dbReference>
<dbReference type="GeneID" id="126282"/>
<dbReference type="KEGG" id="hsa:126282"/>
<dbReference type="MANE-Select" id="ENST00000327473.9">
    <property type="protein sequence ID" value="ENSP00000331827.3"/>
    <property type="RefSeq nucleotide sequence ID" value="NM_152362.3"/>
    <property type="RefSeq protein sequence ID" value="NP_689575.2"/>
</dbReference>
<dbReference type="UCSC" id="uc002max.4">
    <property type="organism name" value="human"/>
</dbReference>
<dbReference type="AGR" id="HGNC:28279"/>
<dbReference type="CTD" id="126282"/>
<dbReference type="DisGeNET" id="126282"/>
<dbReference type="GeneCards" id="TNFAIP8L1"/>
<dbReference type="HGNC" id="HGNC:28279">
    <property type="gene designation" value="TNFAIP8L1"/>
</dbReference>
<dbReference type="HPA" id="ENSG00000185361">
    <property type="expression patterns" value="Tissue enhanced (intestine, liver)"/>
</dbReference>
<dbReference type="MIM" id="615869">
    <property type="type" value="gene"/>
</dbReference>
<dbReference type="neXtProt" id="NX_Q8WVP5"/>
<dbReference type="OpenTargets" id="ENSG00000185361"/>
<dbReference type="PharmGKB" id="PA142670722"/>
<dbReference type="VEuPathDB" id="HostDB:ENSG00000185361"/>
<dbReference type="eggNOG" id="ENOG502S00N">
    <property type="taxonomic scope" value="Eukaryota"/>
</dbReference>
<dbReference type="GeneTree" id="ENSGT00390000003488"/>
<dbReference type="HOGENOM" id="CLU_085918_1_0_1"/>
<dbReference type="InParanoid" id="Q8WVP5"/>
<dbReference type="OMA" id="QRICNGL"/>
<dbReference type="OrthoDB" id="10055976at2759"/>
<dbReference type="PAN-GO" id="Q8WVP5">
    <property type="GO annotations" value="2 GO annotations based on evolutionary models"/>
</dbReference>
<dbReference type="PhylomeDB" id="Q8WVP5"/>
<dbReference type="TreeFam" id="TF323415"/>
<dbReference type="PathwayCommons" id="Q8WVP5"/>
<dbReference type="Reactome" id="R-HSA-1483255">
    <property type="pathway name" value="PI Metabolism"/>
</dbReference>
<dbReference type="SignaLink" id="Q8WVP5"/>
<dbReference type="BioGRID-ORCS" id="126282">
    <property type="hits" value="17 hits in 1157 CRISPR screens"/>
</dbReference>
<dbReference type="ChiTaRS" id="TNFAIP8L1">
    <property type="organism name" value="human"/>
</dbReference>
<dbReference type="GenomeRNAi" id="126282"/>
<dbReference type="Pharos" id="Q8WVP5">
    <property type="development level" value="Tdark"/>
</dbReference>
<dbReference type="PRO" id="PR:Q8WVP5"/>
<dbReference type="Proteomes" id="UP000005640">
    <property type="component" value="Chromosome 19"/>
</dbReference>
<dbReference type="RNAct" id="Q8WVP5">
    <property type="molecule type" value="protein"/>
</dbReference>
<dbReference type="Bgee" id="ENSG00000185361">
    <property type="expression patterns" value="Expressed in bronchial epithelial cell and 149 other cell types or tissues"/>
</dbReference>
<dbReference type="GO" id="GO:0005737">
    <property type="term" value="C:cytoplasm"/>
    <property type="evidence" value="ECO:0000250"/>
    <property type="project" value="UniProtKB"/>
</dbReference>
<dbReference type="GO" id="GO:0042802">
    <property type="term" value="F:identical protein binding"/>
    <property type="evidence" value="ECO:0000353"/>
    <property type="project" value="IntAct"/>
</dbReference>
<dbReference type="GO" id="GO:0032007">
    <property type="term" value="P:negative regulation of TOR signaling"/>
    <property type="evidence" value="ECO:0000250"/>
    <property type="project" value="UniProtKB"/>
</dbReference>
<dbReference type="GO" id="GO:0042981">
    <property type="term" value="P:regulation of apoptotic process"/>
    <property type="evidence" value="ECO:0007669"/>
    <property type="project" value="InterPro"/>
</dbReference>
<dbReference type="FunFam" id="1.20.1440.160:FF:000001">
    <property type="entry name" value="Tumor necrosis factor alpha-induced protein 8-like 1"/>
    <property type="match status" value="1"/>
</dbReference>
<dbReference type="Gene3D" id="1.20.1440.160">
    <property type="entry name" value="Tumor necrosis factor alpha-induced protein 8-like"/>
    <property type="match status" value="1"/>
</dbReference>
<dbReference type="InterPro" id="IPR008477">
    <property type="entry name" value="TNFAIP8-like"/>
</dbReference>
<dbReference type="InterPro" id="IPR038355">
    <property type="entry name" value="TNFAIP8_sf"/>
</dbReference>
<dbReference type="PANTHER" id="PTHR12757:SF2">
    <property type="entry name" value="TUMOR NECROSIS FACTOR ALPHA-INDUCED PROTEIN 8-LIKE PROTEIN 1"/>
    <property type="match status" value="1"/>
</dbReference>
<dbReference type="PANTHER" id="PTHR12757">
    <property type="entry name" value="TUMOR NECROSIS FACTOR INDUCED PROTEIN"/>
    <property type="match status" value="1"/>
</dbReference>
<dbReference type="Pfam" id="PF05527">
    <property type="entry name" value="DUF758"/>
    <property type="match status" value="1"/>
</dbReference>
<feature type="chain" id="PRO_0000285724" description="Tumor necrosis factor alpha-induced protein 8-like protein 1">
    <location>
        <begin position="1"/>
        <end position="186"/>
    </location>
</feature>
<feature type="sequence variant" id="VAR_032048" description="In dbSNP:rs17851549." evidence="2">
    <original>A</original>
    <variation>V</variation>
    <location>
        <position position="118"/>
    </location>
</feature>
<protein>
    <recommendedName>
        <fullName>Tumor necrosis factor alpha-induced protein 8-like protein 1</fullName>
        <shortName evidence="1">TIPE1</shortName>
        <shortName>TNF alpha-induced protein 8-like protein 1</shortName>
        <shortName>TNFAIP8-like protein 1</shortName>
    </recommendedName>
    <alternativeName>
        <fullName evidence="5">Oxidative stress-regulated gene-beta</fullName>
        <shortName evidence="5">Oxy-beta</shortName>
    </alternativeName>
</protein>
<comment type="function">
    <text evidence="1">Acts as a negative regulator of mTOR activity.</text>
</comment>
<comment type="subunit">
    <text evidence="1">Interacts with FBXW5; TNFAIP8L1 competes with TSC2 to bind FBXW5 increasing TSC2 stability by preventing its ubiquitination.</text>
</comment>
<comment type="interaction">
    <interactant intactId="EBI-752102">
        <id>Q8WVP5</id>
    </interactant>
    <interactant intactId="EBI-12170453">
        <id>Q8N2N9-4</id>
        <label>ANKRD36B</label>
    </interactant>
    <organismsDiffer>false</organismsDiffer>
    <experiments>5</experiments>
</comment>
<comment type="interaction">
    <interactant intactId="EBI-752102">
        <id>Q8WVP5</id>
    </interactant>
    <interactant intactId="EBI-2559016">
        <id>Q6NZI2</id>
        <label>CAVIN1</label>
    </interactant>
    <organismsDiffer>false</organismsDiffer>
    <experiments>3</experiments>
</comment>
<comment type="interaction">
    <interactant intactId="EBI-752102">
        <id>Q8WVP5</id>
    </interactant>
    <interactant intactId="EBI-739789">
        <id>Q92997</id>
        <label>DVL3</label>
    </interactant>
    <organismsDiffer>false</organismsDiffer>
    <experiments>6</experiments>
</comment>
<comment type="interaction">
    <interactant intactId="EBI-752102">
        <id>Q8WVP5</id>
    </interactant>
    <interactant intactId="EBI-852291">
        <id>O60447</id>
        <label>EVI5</label>
    </interactant>
    <organismsDiffer>false</organismsDiffer>
    <experiments>3</experiments>
</comment>
<comment type="interaction">
    <interactant intactId="EBI-752102">
        <id>Q8WVP5</id>
    </interactant>
    <interactant intactId="EBI-2432309">
        <id>Q92876</id>
        <label>KLK6</label>
    </interactant>
    <organismsDiffer>false</organismsDiffer>
    <experiments>3</experiments>
</comment>
<comment type="interaction">
    <interactant intactId="EBI-752102">
        <id>Q8WVP5</id>
    </interactant>
    <interactant intactId="EBI-394607">
        <id>Q9NPJ6</id>
        <label>MED4</label>
    </interactant>
    <organismsDiffer>false</organismsDiffer>
    <experiments>3</experiments>
</comment>
<comment type="interaction">
    <interactant intactId="EBI-752102">
        <id>Q8WVP5</id>
    </interactant>
    <interactant intactId="EBI-742388">
        <id>Q9H8W4</id>
        <label>PLEKHF2</label>
    </interactant>
    <organismsDiffer>false</organismsDiffer>
    <experiments>3</experiments>
</comment>
<comment type="interaction">
    <interactant intactId="EBI-752102">
        <id>Q8WVP5</id>
    </interactant>
    <interactant intactId="EBI-355546">
        <id>P61289</id>
        <label>PSME3</label>
    </interactant>
    <organismsDiffer>false</organismsDiffer>
    <experiments>6</experiments>
</comment>
<comment type="interaction">
    <interactant intactId="EBI-752102">
        <id>Q8WVP5</id>
    </interactant>
    <interactant intactId="EBI-358122">
        <id>P32969</id>
        <label>RPL9P9</label>
    </interactant>
    <organismsDiffer>false</organismsDiffer>
    <experiments>3</experiments>
</comment>
<comment type="interaction">
    <interactant intactId="EBI-752102">
        <id>Q8WVP5</id>
    </interactant>
    <interactant intactId="EBI-607085">
        <id>P09012</id>
        <label>SNRPA</label>
    </interactant>
    <organismsDiffer>false</organismsDiffer>
    <experiments>3</experiments>
</comment>
<comment type="interaction">
    <interactant intactId="EBI-752102">
        <id>Q8WVP5</id>
    </interactant>
    <interactant intactId="EBI-745680">
        <id>Q96MF2</id>
        <label>STAC3</label>
    </interactant>
    <organismsDiffer>false</organismsDiffer>
    <experiments>3</experiments>
</comment>
<comment type="interaction">
    <interactant intactId="EBI-752102">
        <id>Q8WVP5</id>
    </interactant>
    <interactant intactId="EBI-752102">
        <id>Q8WVP5</id>
        <label>TNFAIP8L1</label>
    </interactant>
    <organismsDiffer>false</organismsDiffer>
    <experiments>3</experiments>
</comment>
<comment type="interaction">
    <interactant intactId="EBI-752102">
        <id>Q8WVP5</id>
    </interactant>
    <interactant intactId="EBI-6657923">
        <id>Q15696</id>
        <label>ZRSR2</label>
    </interactant>
    <organismsDiffer>false</organismsDiffer>
    <experiments>3</experiments>
</comment>
<comment type="subcellular location">
    <subcellularLocation>
        <location evidence="1">Cytoplasm</location>
    </subcellularLocation>
</comment>
<comment type="tissue specificity">
    <text evidence="3">High expression detected in most carcinoma cell lines, especially in cells transformed with virus genomes.</text>
</comment>
<comment type="induction">
    <text evidence="4">Up-regulated by oxidative stress (OS) at both transcriptional and translational levels.</text>
</comment>
<comment type="similarity">
    <text evidence="6">Belongs to the TNFAIP8 family.</text>
</comment>
<name>TP8L1_HUMAN</name>
<accession>Q8WVP5</accession>
<accession>D6W627</accession>
<organism>
    <name type="scientific">Homo sapiens</name>
    <name type="common">Human</name>
    <dbReference type="NCBI Taxonomy" id="9606"/>
    <lineage>
        <taxon>Eukaryota</taxon>
        <taxon>Metazoa</taxon>
        <taxon>Chordata</taxon>
        <taxon>Craniata</taxon>
        <taxon>Vertebrata</taxon>
        <taxon>Euteleostomi</taxon>
        <taxon>Mammalia</taxon>
        <taxon>Eutheria</taxon>
        <taxon>Euarchontoglires</taxon>
        <taxon>Primates</taxon>
        <taxon>Haplorrhini</taxon>
        <taxon>Catarrhini</taxon>
        <taxon>Hominidae</taxon>
        <taxon>Homo</taxon>
    </lineage>
</organism>
<reference key="1">
    <citation type="journal article" date="2004" name="Nature">
        <title>The DNA sequence and biology of human chromosome 19.</title>
        <authorList>
            <person name="Grimwood J."/>
            <person name="Gordon L.A."/>
            <person name="Olsen A.S."/>
            <person name="Terry A."/>
            <person name="Schmutz J."/>
            <person name="Lamerdin J.E."/>
            <person name="Hellsten U."/>
            <person name="Goodstein D."/>
            <person name="Couronne O."/>
            <person name="Tran-Gyamfi M."/>
            <person name="Aerts A."/>
            <person name="Altherr M."/>
            <person name="Ashworth L."/>
            <person name="Bajorek E."/>
            <person name="Black S."/>
            <person name="Branscomb E."/>
            <person name="Caenepeel S."/>
            <person name="Carrano A.V."/>
            <person name="Caoile C."/>
            <person name="Chan Y.M."/>
            <person name="Christensen M."/>
            <person name="Cleland C.A."/>
            <person name="Copeland A."/>
            <person name="Dalin E."/>
            <person name="Dehal P."/>
            <person name="Denys M."/>
            <person name="Detter J.C."/>
            <person name="Escobar J."/>
            <person name="Flowers D."/>
            <person name="Fotopulos D."/>
            <person name="Garcia C."/>
            <person name="Georgescu A.M."/>
            <person name="Glavina T."/>
            <person name="Gomez M."/>
            <person name="Gonzales E."/>
            <person name="Groza M."/>
            <person name="Hammon N."/>
            <person name="Hawkins T."/>
            <person name="Haydu L."/>
            <person name="Ho I."/>
            <person name="Huang W."/>
            <person name="Israni S."/>
            <person name="Jett J."/>
            <person name="Kadner K."/>
            <person name="Kimball H."/>
            <person name="Kobayashi A."/>
            <person name="Larionov V."/>
            <person name="Leem S.-H."/>
            <person name="Lopez F."/>
            <person name="Lou Y."/>
            <person name="Lowry S."/>
            <person name="Malfatti S."/>
            <person name="Martinez D."/>
            <person name="McCready P.M."/>
            <person name="Medina C."/>
            <person name="Morgan J."/>
            <person name="Nelson K."/>
            <person name="Nolan M."/>
            <person name="Ovcharenko I."/>
            <person name="Pitluck S."/>
            <person name="Pollard M."/>
            <person name="Popkie A.P."/>
            <person name="Predki P."/>
            <person name="Quan G."/>
            <person name="Ramirez L."/>
            <person name="Rash S."/>
            <person name="Retterer J."/>
            <person name="Rodriguez A."/>
            <person name="Rogers S."/>
            <person name="Salamov A."/>
            <person name="Salazar A."/>
            <person name="She X."/>
            <person name="Smith D."/>
            <person name="Slezak T."/>
            <person name="Solovyev V."/>
            <person name="Thayer N."/>
            <person name="Tice H."/>
            <person name="Tsai M."/>
            <person name="Ustaszewska A."/>
            <person name="Vo N."/>
            <person name="Wagner M."/>
            <person name="Wheeler J."/>
            <person name="Wu K."/>
            <person name="Xie G."/>
            <person name="Yang J."/>
            <person name="Dubchak I."/>
            <person name="Furey T.S."/>
            <person name="DeJong P."/>
            <person name="Dickson M."/>
            <person name="Gordon D."/>
            <person name="Eichler E.E."/>
            <person name="Pennacchio L.A."/>
            <person name="Richardson P."/>
            <person name="Stubbs L."/>
            <person name="Rokhsar D.S."/>
            <person name="Myers R.M."/>
            <person name="Rubin E.M."/>
            <person name="Lucas S.M."/>
        </authorList>
    </citation>
    <scope>NUCLEOTIDE SEQUENCE [LARGE SCALE GENOMIC DNA]</scope>
</reference>
<reference key="2">
    <citation type="submission" date="2005-09" db="EMBL/GenBank/DDBJ databases">
        <authorList>
            <person name="Mural R.J."/>
            <person name="Istrail S."/>
            <person name="Sutton G.G."/>
            <person name="Florea L."/>
            <person name="Halpern A.L."/>
            <person name="Mobarry C.M."/>
            <person name="Lippert R."/>
            <person name="Walenz B."/>
            <person name="Shatkay H."/>
            <person name="Dew I."/>
            <person name="Miller J.R."/>
            <person name="Flanigan M.J."/>
            <person name="Edwards N.J."/>
            <person name="Bolanos R."/>
            <person name="Fasulo D."/>
            <person name="Halldorsson B.V."/>
            <person name="Hannenhalli S."/>
            <person name="Turner R."/>
            <person name="Yooseph S."/>
            <person name="Lu F."/>
            <person name="Nusskern D.R."/>
            <person name="Shue B.C."/>
            <person name="Zheng X.H."/>
            <person name="Zhong F."/>
            <person name="Delcher A.L."/>
            <person name="Huson D.H."/>
            <person name="Kravitz S.A."/>
            <person name="Mouchard L."/>
            <person name="Reinert K."/>
            <person name="Remington K.A."/>
            <person name="Clark A.G."/>
            <person name="Waterman M.S."/>
            <person name="Eichler E.E."/>
            <person name="Adams M.D."/>
            <person name="Hunkapiller M.W."/>
            <person name="Myers E.W."/>
            <person name="Venter J.C."/>
        </authorList>
    </citation>
    <scope>NUCLEOTIDE SEQUENCE [LARGE SCALE GENOMIC DNA]</scope>
</reference>
<reference key="3">
    <citation type="journal article" date="2004" name="Genome Res.">
        <title>The status, quality, and expansion of the NIH full-length cDNA project: the Mammalian Gene Collection (MGC).</title>
        <authorList>
            <consortium name="The MGC Project Team"/>
        </authorList>
    </citation>
    <scope>NUCLEOTIDE SEQUENCE [LARGE SCALE MRNA]</scope>
    <scope>VARIANT VAL-118</scope>
    <source>
        <tissue>Lung</tissue>
    </source>
</reference>
<reference key="4">
    <citation type="journal article" date="2011" name="Mol. Immunol.">
        <title>The expression of TIPE1 in murine tissues and human cell lines.</title>
        <authorList>
            <person name="Cui J."/>
            <person name="Zhang G."/>
            <person name="Hao C."/>
            <person name="Wang Y."/>
            <person name="Lou Y."/>
            <person name="Zhang W."/>
            <person name="Wang J."/>
            <person name="Liu S."/>
        </authorList>
    </citation>
    <scope>TISSUE SPECIFICITY</scope>
</reference>
<reference key="5">
    <citation type="journal article" date="2014" name="J. Neurochem.">
        <title>Tnfaip8 l1/Oxi-beta binds to FBXW5, increasing autophagy through activation of TSC2 in a Parkinson's disease model.</title>
        <authorList>
            <person name="Ha J.Y."/>
            <person name="Kim J.S."/>
            <person name="Kang Y.H."/>
            <person name="Bok E."/>
            <person name="Kim Y.S."/>
            <person name="Son J.H."/>
        </authorList>
    </citation>
    <scope>INDUCTION</scope>
</reference>
<proteinExistence type="evidence at protein level"/>
<keyword id="KW-0963">Cytoplasm</keyword>
<keyword id="KW-1267">Proteomics identification</keyword>
<keyword id="KW-1185">Reference proteome</keyword>